<name>IF1A2_METAC</name>
<evidence type="ECO:0000250" key="1"/>
<evidence type="ECO:0000256" key="2">
    <source>
        <dbReference type="SAM" id="MobiDB-lite"/>
    </source>
</evidence>
<evidence type="ECO:0000305" key="3"/>
<protein>
    <recommendedName>
        <fullName>Translation initiation factor 1A 2</fullName>
        <shortName>aIF-1A 2</shortName>
    </recommendedName>
</protein>
<reference key="1">
    <citation type="journal article" date="2002" name="Genome Res.">
        <title>The genome of Methanosarcina acetivorans reveals extensive metabolic and physiological diversity.</title>
        <authorList>
            <person name="Galagan J.E."/>
            <person name="Nusbaum C."/>
            <person name="Roy A."/>
            <person name="Endrizzi M.G."/>
            <person name="Macdonald P."/>
            <person name="FitzHugh W."/>
            <person name="Calvo S."/>
            <person name="Engels R."/>
            <person name="Smirnov S."/>
            <person name="Atnoor D."/>
            <person name="Brown A."/>
            <person name="Allen N."/>
            <person name="Naylor J."/>
            <person name="Stange-Thomann N."/>
            <person name="DeArellano K."/>
            <person name="Johnson R."/>
            <person name="Linton L."/>
            <person name="McEwan P."/>
            <person name="McKernan K."/>
            <person name="Talamas J."/>
            <person name="Tirrell A."/>
            <person name="Ye W."/>
            <person name="Zimmer A."/>
            <person name="Barber R.D."/>
            <person name="Cann I."/>
            <person name="Graham D.E."/>
            <person name="Grahame D.A."/>
            <person name="Guss A.M."/>
            <person name="Hedderich R."/>
            <person name="Ingram-Smith C."/>
            <person name="Kuettner H.C."/>
            <person name="Krzycki J.A."/>
            <person name="Leigh J.A."/>
            <person name="Li W."/>
            <person name="Liu J."/>
            <person name="Mukhopadhyay B."/>
            <person name="Reeve J.N."/>
            <person name="Smith K."/>
            <person name="Springer T.A."/>
            <person name="Umayam L.A."/>
            <person name="White O."/>
            <person name="White R.H."/>
            <person name="de Macario E.C."/>
            <person name="Ferry J.G."/>
            <person name="Jarrell K.F."/>
            <person name="Jing H."/>
            <person name="Macario A.J.L."/>
            <person name="Paulsen I.T."/>
            <person name="Pritchett M."/>
            <person name="Sowers K.R."/>
            <person name="Swanson R.V."/>
            <person name="Zinder S.H."/>
            <person name="Lander E."/>
            <person name="Metcalf W.W."/>
            <person name="Birren B."/>
        </authorList>
    </citation>
    <scope>NUCLEOTIDE SEQUENCE [LARGE SCALE GENOMIC DNA]</scope>
    <source>
        <strain>ATCC 35395 / DSM 2834 / JCM 12185 / C2A</strain>
    </source>
</reference>
<comment type="function">
    <text evidence="1">Seems to be required for maximal rate of protein biosynthesis. Enhances ribosome dissociation into subunits and stabilizes the binding of the initiator Met-tRNA(I) to 40 S ribosomal subunits (By similarity).</text>
</comment>
<comment type="similarity">
    <text evidence="3">Belongs to the eIF-1A family.</text>
</comment>
<organism>
    <name type="scientific">Methanosarcina acetivorans (strain ATCC 35395 / DSM 2834 / JCM 12185 / C2A)</name>
    <dbReference type="NCBI Taxonomy" id="188937"/>
    <lineage>
        <taxon>Archaea</taxon>
        <taxon>Methanobacteriati</taxon>
        <taxon>Methanobacteriota</taxon>
        <taxon>Stenosarchaea group</taxon>
        <taxon>Methanomicrobia</taxon>
        <taxon>Methanosarcinales</taxon>
        <taxon>Methanosarcinaceae</taxon>
        <taxon>Methanosarcina</taxon>
    </lineage>
</organism>
<sequence length="105" mass="12176">MRKRREGSAAPSTQEVTRVRTPRKENHEVLATVGSLLGSKRVNLQCMDGVVRMGRIPGSKNKKMWIREGDVVIVTPWEIQDTKADVIWKYTRPQIEWLERKGYLK</sequence>
<accession>Q8TR33</accession>
<dbReference type="EMBL" id="AE010299">
    <property type="protein sequence ID" value="AAM04767.1"/>
    <property type="molecule type" value="Genomic_DNA"/>
</dbReference>
<dbReference type="RefSeq" id="WP_011021369.1">
    <property type="nucleotide sequence ID" value="NC_003552.1"/>
</dbReference>
<dbReference type="SMR" id="Q8TR33"/>
<dbReference type="FunCoup" id="Q8TR33">
    <property type="interactions" value="130"/>
</dbReference>
<dbReference type="STRING" id="188937.MA_1351"/>
<dbReference type="EnsemblBacteria" id="AAM04767">
    <property type="protein sequence ID" value="AAM04767"/>
    <property type="gene ID" value="MA_1351"/>
</dbReference>
<dbReference type="GeneID" id="1473239"/>
<dbReference type="KEGG" id="mac:MA_1351"/>
<dbReference type="HOGENOM" id="CLU_109098_1_2_2"/>
<dbReference type="InParanoid" id="Q8TR33"/>
<dbReference type="OrthoDB" id="2586at2157"/>
<dbReference type="PhylomeDB" id="Q8TR33"/>
<dbReference type="Proteomes" id="UP000002487">
    <property type="component" value="Chromosome"/>
</dbReference>
<dbReference type="GO" id="GO:0005737">
    <property type="term" value="C:cytoplasm"/>
    <property type="evidence" value="ECO:0000318"/>
    <property type="project" value="GO_Central"/>
</dbReference>
<dbReference type="GO" id="GO:0003723">
    <property type="term" value="F:RNA binding"/>
    <property type="evidence" value="ECO:0007669"/>
    <property type="project" value="InterPro"/>
</dbReference>
<dbReference type="GO" id="GO:0003743">
    <property type="term" value="F:translation initiation factor activity"/>
    <property type="evidence" value="ECO:0000318"/>
    <property type="project" value="GO_Central"/>
</dbReference>
<dbReference type="GO" id="GO:0006413">
    <property type="term" value="P:translational initiation"/>
    <property type="evidence" value="ECO:0000318"/>
    <property type="project" value="GO_Central"/>
</dbReference>
<dbReference type="CDD" id="cd05793">
    <property type="entry name" value="S1_IF1A"/>
    <property type="match status" value="1"/>
</dbReference>
<dbReference type="Gene3D" id="2.40.50.140">
    <property type="entry name" value="Nucleic acid-binding proteins"/>
    <property type="match status" value="1"/>
</dbReference>
<dbReference type="HAMAP" id="MF_00216">
    <property type="entry name" value="aIF_1A"/>
    <property type="match status" value="1"/>
</dbReference>
<dbReference type="InterPro" id="IPR012340">
    <property type="entry name" value="NA-bd_OB-fold"/>
</dbReference>
<dbReference type="InterPro" id="IPR006196">
    <property type="entry name" value="RNA-binding_domain_S1_IF1"/>
</dbReference>
<dbReference type="InterPro" id="IPR001253">
    <property type="entry name" value="TIF_eIF-1A"/>
</dbReference>
<dbReference type="InterPro" id="IPR018104">
    <property type="entry name" value="TIF_eIF-1A_CS"/>
</dbReference>
<dbReference type="NCBIfam" id="TIGR00523">
    <property type="entry name" value="eIF-1A"/>
    <property type="match status" value="1"/>
</dbReference>
<dbReference type="NCBIfam" id="NF003084">
    <property type="entry name" value="PRK04012.1-3"/>
    <property type="match status" value="1"/>
</dbReference>
<dbReference type="NCBIfam" id="NF003085">
    <property type="entry name" value="PRK04012.1-5"/>
    <property type="match status" value="1"/>
</dbReference>
<dbReference type="PANTHER" id="PTHR21668">
    <property type="entry name" value="EIF-1A"/>
    <property type="match status" value="1"/>
</dbReference>
<dbReference type="Pfam" id="PF01176">
    <property type="entry name" value="eIF-1a"/>
    <property type="match status" value="1"/>
</dbReference>
<dbReference type="SMART" id="SM00652">
    <property type="entry name" value="eIF1a"/>
    <property type="match status" value="1"/>
</dbReference>
<dbReference type="SUPFAM" id="SSF50249">
    <property type="entry name" value="Nucleic acid-binding proteins"/>
    <property type="match status" value="1"/>
</dbReference>
<dbReference type="PROSITE" id="PS01262">
    <property type="entry name" value="IF1A"/>
    <property type="match status" value="1"/>
</dbReference>
<dbReference type="PROSITE" id="PS50832">
    <property type="entry name" value="S1_IF1_TYPE"/>
    <property type="match status" value="1"/>
</dbReference>
<keyword id="KW-0396">Initiation factor</keyword>
<keyword id="KW-0648">Protein biosynthesis</keyword>
<keyword id="KW-1185">Reference proteome</keyword>
<feature type="chain" id="PRO_0000145119" description="Translation initiation factor 1A 2">
    <location>
        <begin position="1"/>
        <end position="105"/>
    </location>
</feature>
<feature type="domain" description="S1-like">
    <location>
        <begin position="17"/>
        <end position="91"/>
    </location>
</feature>
<feature type="region of interest" description="Disordered" evidence="2">
    <location>
        <begin position="1"/>
        <end position="22"/>
    </location>
</feature>
<gene>
    <name type="primary">eIF1A2</name>
    <name type="ordered locus">MA_1351</name>
</gene>
<proteinExistence type="inferred from homology"/>